<protein>
    <recommendedName>
        <fullName evidence="1">Peptidyl-tRNA hydrolase</fullName>
        <shortName evidence="1">Pth</shortName>
        <ecNumber evidence="1">3.1.1.29</ecNumber>
    </recommendedName>
</protein>
<proteinExistence type="inferred from homology"/>
<keyword id="KW-0963">Cytoplasm</keyword>
<keyword id="KW-0378">Hydrolase</keyword>
<keyword id="KW-1185">Reference proteome</keyword>
<keyword id="KW-0694">RNA-binding</keyword>
<keyword id="KW-0820">tRNA-binding</keyword>
<gene>
    <name evidence="1" type="primary">pth</name>
    <name type="ordered locus">Sden_0818</name>
</gene>
<dbReference type="EC" id="3.1.1.29" evidence="1"/>
<dbReference type="EMBL" id="CP000302">
    <property type="protein sequence ID" value="ABE54107.1"/>
    <property type="molecule type" value="Genomic_DNA"/>
</dbReference>
<dbReference type="RefSeq" id="WP_011495272.1">
    <property type="nucleotide sequence ID" value="NC_007954.1"/>
</dbReference>
<dbReference type="SMR" id="Q12R19"/>
<dbReference type="STRING" id="318161.Sden_0818"/>
<dbReference type="KEGG" id="sdn:Sden_0818"/>
<dbReference type="eggNOG" id="COG0193">
    <property type="taxonomic scope" value="Bacteria"/>
</dbReference>
<dbReference type="HOGENOM" id="CLU_062456_3_1_6"/>
<dbReference type="OrthoDB" id="9800507at2"/>
<dbReference type="Proteomes" id="UP000001982">
    <property type="component" value="Chromosome"/>
</dbReference>
<dbReference type="GO" id="GO:0005737">
    <property type="term" value="C:cytoplasm"/>
    <property type="evidence" value="ECO:0007669"/>
    <property type="project" value="UniProtKB-SubCell"/>
</dbReference>
<dbReference type="GO" id="GO:0004045">
    <property type="term" value="F:peptidyl-tRNA hydrolase activity"/>
    <property type="evidence" value="ECO:0007669"/>
    <property type="project" value="UniProtKB-UniRule"/>
</dbReference>
<dbReference type="GO" id="GO:0000049">
    <property type="term" value="F:tRNA binding"/>
    <property type="evidence" value="ECO:0007669"/>
    <property type="project" value="UniProtKB-UniRule"/>
</dbReference>
<dbReference type="GO" id="GO:0006515">
    <property type="term" value="P:protein quality control for misfolded or incompletely synthesized proteins"/>
    <property type="evidence" value="ECO:0007669"/>
    <property type="project" value="UniProtKB-UniRule"/>
</dbReference>
<dbReference type="GO" id="GO:0072344">
    <property type="term" value="P:rescue of stalled ribosome"/>
    <property type="evidence" value="ECO:0007669"/>
    <property type="project" value="UniProtKB-UniRule"/>
</dbReference>
<dbReference type="CDD" id="cd00462">
    <property type="entry name" value="PTH"/>
    <property type="match status" value="1"/>
</dbReference>
<dbReference type="FunFam" id="3.40.50.1470:FF:000001">
    <property type="entry name" value="Peptidyl-tRNA hydrolase"/>
    <property type="match status" value="1"/>
</dbReference>
<dbReference type="Gene3D" id="3.40.50.1470">
    <property type="entry name" value="Peptidyl-tRNA hydrolase"/>
    <property type="match status" value="1"/>
</dbReference>
<dbReference type="HAMAP" id="MF_00083">
    <property type="entry name" value="Pept_tRNA_hydro_bact"/>
    <property type="match status" value="1"/>
</dbReference>
<dbReference type="InterPro" id="IPR001328">
    <property type="entry name" value="Pept_tRNA_hydro"/>
</dbReference>
<dbReference type="InterPro" id="IPR018171">
    <property type="entry name" value="Pept_tRNA_hydro_CS"/>
</dbReference>
<dbReference type="InterPro" id="IPR036416">
    <property type="entry name" value="Pept_tRNA_hydro_sf"/>
</dbReference>
<dbReference type="NCBIfam" id="TIGR00447">
    <property type="entry name" value="pth"/>
    <property type="match status" value="1"/>
</dbReference>
<dbReference type="PANTHER" id="PTHR17224">
    <property type="entry name" value="PEPTIDYL-TRNA HYDROLASE"/>
    <property type="match status" value="1"/>
</dbReference>
<dbReference type="PANTHER" id="PTHR17224:SF1">
    <property type="entry name" value="PEPTIDYL-TRNA HYDROLASE"/>
    <property type="match status" value="1"/>
</dbReference>
<dbReference type="Pfam" id="PF01195">
    <property type="entry name" value="Pept_tRNA_hydro"/>
    <property type="match status" value="1"/>
</dbReference>
<dbReference type="SUPFAM" id="SSF53178">
    <property type="entry name" value="Peptidyl-tRNA hydrolase-like"/>
    <property type="match status" value="1"/>
</dbReference>
<dbReference type="PROSITE" id="PS01196">
    <property type="entry name" value="PEPT_TRNA_HYDROL_2"/>
    <property type="match status" value="1"/>
</dbReference>
<accession>Q12R19</accession>
<evidence type="ECO:0000255" key="1">
    <source>
        <dbReference type="HAMAP-Rule" id="MF_00083"/>
    </source>
</evidence>
<reference key="1">
    <citation type="submission" date="2006-03" db="EMBL/GenBank/DDBJ databases">
        <title>Complete sequence of Shewanella denitrificans OS217.</title>
        <authorList>
            <consortium name="US DOE Joint Genome Institute"/>
            <person name="Copeland A."/>
            <person name="Lucas S."/>
            <person name="Lapidus A."/>
            <person name="Barry K."/>
            <person name="Detter J.C."/>
            <person name="Glavina del Rio T."/>
            <person name="Hammon N."/>
            <person name="Israni S."/>
            <person name="Dalin E."/>
            <person name="Tice H."/>
            <person name="Pitluck S."/>
            <person name="Brettin T."/>
            <person name="Bruce D."/>
            <person name="Han C."/>
            <person name="Tapia R."/>
            <person name="Gilna P."/>
            <person name="Kiss H."/>
            <person name="Schmutz J."/>
            <person name="Larimer F."/>
            <person name="Land M."/>
            <person name="Hauser L."/>
            <person name="Kyrpides N."/>
            <person name="Lykidis A."/>
            <person name="Richardson P."/>
        </authorList>
    </citation>
    <scope>NUCLEOTIDE SEQUENCE [LARGE SCALE GENOMIC DNA]</scope>
    <source>
        <strain>OS217 / ATCC BAA-1090 / DSM 15013</strain>
    </source>
</reference>
<name>PTH_SHEDO</name>
<organism>
    <name type="scientific">Shewanella denitrificans (strain OS217 / ATCC BAA-1090 / DSM 15013)</name>
    <dbReference type="NCBI Taxonomy" id="318161"/>
    <lineage>
        <taxon>Bacteria</taxon>
        <taxon>Pseudomonadati</taxon>
        <taxon>Pseudomonadota</taxon>
        <taxon>Gammaproteobacteria</taxon>
        <taxon>Alteromonadales</taxon>
        <taxon>Shewanellaceae</taxon>
        <taxon>Shewanella</taxon>
    </lineage>
</organism>
<sequence length="195" mass="21208">MSNIKLIVGLANPGAEYAQTRHNAGAWYVHELARVCNVTLVPESKYYGLAARATLHGRDVRLLIPATFMNLSGKSVAALANFFRILPEEILVAHDELDIEPGVAKFKLGGGHGGHNGLKDIIAQMGNDKGFHRLRIGIGHPGDKNKVSGYVLGKAPASEQEKMDAAIDEAVRATEILFKQDMVKAMNRLHSFKAE</sequence>
<comment type="function">
    <text evidence="1">Hydrolyzes ribosome-free peptidyl-tRNAs (with 1 or more amino acids incorporated), which drop off the ribosome during protein synthesis, or as a result of ribosome stalling.</text>
</comment>
<comment type="function">
    <text evidence="1">Catalyzes the release of premature peptidyl moieties from peptidyl-tRNA molecules trapped in stalled 50S ribosomal subunits, and thus maintains levels of free tRNAs and 50S ribosomes.</text>
</comment>
<comment type="catalytic activity">
    <reaction evidence="1">
        <text>an N-acyl-L-alpha-aminoacyl-tRNA + H2O = an N-acyl-L-amino acid + a tRNA + H(+)</text>
        <dbReference type="Rhea" id="RHEA:54448"/>
        <dbReference type="Rhea" id="RHEA-COMP:10123"/>
        <dbReference type="Rhea" id="RHEA-COMP:13883"/>
        <dbReference type="ChEBI" id="CHEBI:15377"/>
        <dbReference type="ChEBI" id="CHEBI:15378"/>
        <dbReference type="ChEBI" id="CHEBI:59874"/>
        <dbReference type="ChEBI" id="CHEBI:78442"/>
        <dbReference type="ChEBI" id="CHEBI:138191"/>
        <dbReference type="EC" id="3.1.1.29"/>
    </reaction>
</comment>
<comment type="subunit">
    <text evidence="1">Monomer.</text>
</comment>
<comment type="subcellular location">
    <subcellularLocation>
        <location evidence="1">Cytoplasm</location>
    </subcellularLocation>
</comment>
<comment type="similarity">
    <text evidence="1">Belongs to the PTH family.</text>
</comment>
<feature type="chain" id="PRO_0000264102" description="Peptidyl-tRNA hydrolase">
    <location>
        <begin position="1"/>
        <end position="195"/>
    </location>
</feature>
<feature type="active site" description="Proton acceptor" evidence="1">
    <location>
        <position position="22"/>
    </location>
</feature>
<feature type="binding site" evidence="1">
    <location>
        <position position="17"/>
    </location>
    <ligand>
        <name>tRNA</name>
        <dbReference type="ChEBI" id="CHEBI:17843"/>
    </ligand>
</feature>
<feature type="binding site" evidence="1">
    <location>
        <position position="68"/>
    </location>
    <ligand>
        <name>tRNA</name>
        <dbReference type="ChEBI" id="CHEBI:17843"/>
    </ligand>
</feature>
<feature type="binding site" evidence="1">
    <location>
        <position position="70"/>
    </location>
    <ligand>
        <name>tRNA</name>
        <dbReference type="ChEBI" id="CHEBI:17843"/>
    </ligand>
</feature>
<feature type="binding site" evidence="1">
    <location>
        <position position="116"/>
    </location>
    <ligand>
        <name>tRNA</name>
        <dbReference type="ChEBI" id="CHEBI:17843"/>
    </ligand>
</feature>
<feature type="site" description="Discriminates between blocked and unblocked aminoacyl-tRNA" evidence="1">
    <location>
        <position position="12"/>
    </location>
</feature>
<feature type="site" description="Stabilizes the basic form of H active site to accept a proton" evidence="1">
    <location>
        <position position="95"/>
    </location>
</feature>